<protein>
    <recommendedName>
        <fullName evidence="1">Histidine ammonia-lyase</fullName>
        <shortName evidence="1">Histidase</shortName>
        <ecNumber evidence="1">4.3.1.3</ecNumber>
    </recommendedName>
</protein>
<feature type="chain" id="PRO_0000336590" description="Histidine ammonia-lyase">
    <location>
        <begin position="1"/>
        <end position="513"/>
    </location>
</feature>
<feature type="modified residue" description="2,3-didehydroalanine (Ser)" evidence="1">
    <location>
        <position position="145"/>
    </location>
</feature>
<feature type="cross-link" description="5-imidazolinone (Ala-Gly)" evidence="1">
    <location>
        <begin position="144"/>
        <end position="146"/>
    </location>
</feature>
<accession>A3CL24</accession>
<proteinExistence type="inferred from homology"/>
<reference key="1">
    <citation type="journal article" date="2007" name="J. Bacteriol.">
        <title>Genome of the opportunistic pathogen Streptococcus sanguinis.</title>
        <authorList>
            <person name="Xu P."/>
            <person name="Alves J.M."/>
            <person name="Kitten T."/>
            <person name="Brown A."/>
            <person name="Chen Z."/>
            <person name="Ozaki L.S."/>
            <person name="Manque P."/>
            <person name="Ge X."/>
            <person name="Serrano M.G."/>
            <person name="Puiu D."/>
            <person name="Hendricks S."/>
            <person name="Wang Y."/>
            <person name="Chaplin M.D."/>
            <person name="Akan D."/>
            <person name="Paik S."/>
            <person name="Peterson D.L."/>
            <person name="Macrina F.L."/>
            <person name="Buck G.A."/>
        </authorList>
    </citation>
    <scope>NUCLEOTIDE SEQUENCE [LARGE SCALE GENOMIC DNA]</scope>
    <source>
        <strain>SK36</strain>
    </source>
</reference>
<comment type="catalytic activity">
    <reaction evidence="1">
        <text>L-histidine = trans-urocanate + NH4(+)</text>
        <dbReference type="Rhea" id="RHEA:21232"/>
        <dbReference type="ChEBI" id="CHEBI:17771"/>
        <dbReference type="ChEBI" id="CHEBI:28938"/>
        <dbReference type="ChEBI" id="CHEBI:57595"/>
        <dbReference type="EC" id="4.3.1.3"/>
    </reaction>
</comment>
<comment type="pathway">
    <text evidence="1">Amino-acid degradation; L-histidine degradation into L-glutamate; N-formimidoyl-L-glutamate from L-histidine: step 1/3.</text>
</comment>
<comment type="subcellular location">
    <subcellularLocation>
        <location evidence="1">Cytoplasm</location>
    </subcellularLocation>
</comment>
<comment type="PTM">
    <text evidence="1">Contains an active site 4-methylidene-imidazol-5-one (MIO), which is formed autocatalytically by cyclization and dehydration of residues Ala-Ser-Gly.</text>
</comment>
<comment type="similarity">
    <text evidence="1">Belongs to the PAL/histidase family.</text>
</comment>
<comment type="sequence caution" evidence="2">
    <conflict type="erroneous initiation">
        <sequence resource="EMBL-CDS" id="ABN43879"/>
    </conflict>
</comment>
<dbReference type="EC" id="4.3.1.3" evidence="1"/>
<dbReference type="EMBL" id="CP000387">
    <property type="protein sequence ID" value="ABN43879.1"/>
    <property type="status" value="ALT_INIT"/>
    <property type="molecule type" value="Genomic_DNA"/>
</dbReference>
<dbReference type="RefSeq" id="WP_032916282.1">
    <property type="nucleotide sequence ID" value="NC_009009.1"/>
</dbReference>
<dbReference type="RefSeq" id="YP_001034429.1">
    <property type="nucleotide sequence ID" value="NC_009009.1"/>
</dbReference>
<dbReference type="SMR" id="A3CL24"/>
<dbReference type="STRING" id="388919.SSA_0429"/>
<dbReference type="KEGG" id="ssa:SSA_0429"/>
<dbReference type="PATRIC" id="fig|388919.9.peg.415"/>
<dbReference type="eggNOG" id="COG2986">
    <property type="taxonomic scope" value="Bacteria"/>
</dbReference>
<dbReference type="HOGENOM" id="CLU_014801_4_0_9"/>
<dbReference type="OrthoDB" id="9806955at2"/>
<dbReference type="UniPathway" id="UPA00379">
    <property type="reaction ID" value="UER00549"/>
</dbReference>
<dbReference type="Proteomes" id="UP000002148">
    <property type="component" value="Chromosome"/>
</dbReference>
<dbReference type="GO" id="GO:0005737">
    <property type="term" value="C:cytoplasm"/>
    <property type="evidence" value="ECO:0007669"/>
    <property type="project" value="UniProtKB-SubCell"/>
</dbReference>
<dbReference type="GO" id="GO:0004397">
    <property type="term" value="F:histidine ammonia-lyase activity"/>
    <property type="evidence" value="ECO:0007669"/>
    <property type="project" value="UniProtKB-UniRule"/>
</dbReference>
<dbReference type="GO" id="GO:0019556">
    <property type="term" value="P:L-histidine catabolic process to glutamate and formamide"/>
    <property type="evidence" value="ECO:0007669"/>
    <property type="project" value="UniProtKB-UniPathway"/>
</dbReference>
<dbReference type="GO" id="GO:0019557">
    <property type="term" value="P:L-histidine catabolic process to glutamate and formate"/>
    <property type="evidence" value="ECO:0007669"/>
    <property type="project" value="UniProtKB-UniPathway"/>
</dbReference>
<dbReference type="CDD" id="cd00332">
    <property type="entry name" value="PAL-HAL"/>
    <property type="match status" value="1"/>
</dbReference>
<dbReference type="FunFam" id="1.10.275.10:FF:000005">
    <property type="entry name" value="Histidine ammonia-lyase"/>
    <property type="match status" value="1"/>
</dbReference>
<dbReference type="FunFam" id="1.20.200.10:FF:000003">
    <property type="entry name" value="Histidine ammonia-lyase"/>
    <property type="match status" value="1"/>
</dbReference>
<dbReference type="Gene3D" id="1.20.200.10">
    <property type="entry name" value="Fumarase/aspartase (Central domain)"/>
    <property type="match status" value="1"/>
</dbReference>
<dbReference type="Gene3D" id="1.10.275.10">
    <property type="entry name" value="Fumarase/aspartase (N-terminal domain)"/>
    <property type="match status" value="1"/>
</dbReference>
<dbReference type="HAMAP" id="MF_00229">
    <property type="entry name" value="His_ammonia_lyase"/>
    <property type="match status" value="1"/>
</dbReference>
<dbReference type="InterPro" id="IPR001106">
    <property type="entry name" value="Aromatic_Lyase"/>
</dbReference>
<dbReference type="InterPro" id="IPR024083">
    <property type="entry name" value="Fumarase/histidase_N"/>
</dbReference>
<dbReference type="InterPro" id="IPR005921">
    <property type="entry name" value="HutH"/>
</dbReference>
<dbReference type="InterPro" id="IPR008948">
    <property type="entry name" value="L-Aspartase-like"/>
</dbReference>
<dbReference type="InterPro" id="IPR022313">
    <property type="entry name" value="Phe/His_NH3-lyase_AS"/>
</dbReference>
<dbReference type="NCBIfam" id="TIGR01225">
    <property type="entry name" value="hutH"/>
    <property type="match status" value="1"/>
</dbReference>
<dbReference type="NCBIfam" id="NF006871">
    <property type="entry name" value="PRK09367.1"/>
    <property type="match status" value="1"/>
</dbReference>
<dbReference type="PANTHER" id="PTHR10362">
    <property type="entry name" value="HISTIDINE AMMONIA-LYASE"/>
    <property type="match status" value="1"/>
</dbReference>
<dbReference type="Pfam" id="PF00221">
    <property type="entry name" value="Lyase_aromatic"/>
    <property type="match status" value="1"/>
</dbReference>
<dbReference type="SUPFAM" id="SSF48557">
    <property type="entry name" value="L-aspartase-like"/>
    <property type="match status" value="1"/>
</dbReference>
<dbReference type="PROSITE" id="PS00488">
    <property type="entry name" value="PAL_HISTIDASE"/>
    <property type="match status" value="1"/>
</dbReference>
<sequence length="513" mass="55643">MTHVINLDGEHLTLEDVIAVARHGATCEIDQEAKKAVEASRKIVDDIVREKRVVYGVTTGFGSLCNVSISPEDTTQLQENLIRTHSSGYGDPLPEDAVRAIMLIRINSLVKGYSGIRLSTVEKLLELLNKGVVPYIPEKGSLGASGDLAPLAHMVLPMLGLGRAYYQGQLLSGQEALDKAGIEKIALAAKEGLALINGTTVLTGIGALATYDAIQLLKLSDVAGALSMEVHNGITSPFEEDLHTIRPQSGQLATARNIRNLLEGSGNTTVATQQRVQDPYTLRCIPQIHGASKDSIAYVKTKVEIEINSVTDNPIITKEGHVISGGNFHGEPMAQPFDFLGIAISEIGNVSERRVERLVNSQLSKLPSFLVKHPGLNSGFMITQYACASLASENKVLSHPASVDSIPSCENQEDFVSMGTTAARKAAEILKNSRRIVATEIMAACQALDLKPENHELGKGTKPAYDLFRQHVRFIEFDKDIEIYEELNKASELIENEEFLAAVEKAVDLSIQF</sequence>
<name>HUTH_STRSV</name>
<gene>
    <name evidence="1" type="primary">hutH</name>
    <name type="ordered locus">SSA_0429</name>
</gene>
<organism>
    <name type="scientific">Streptococcus sanguinis (strain SK36)</name>
    <dbReference type="NCBI Taxonomy" id="388919"/>
    <lineage>
        <taxon>Bacteria</taxon>
        <taxon>Bacillati</taxon>
        <taxon>Bacillota</taxon>
        <taxon>Bacilli</taxon>
        <taxon>Lactobacillales</taxon>
        <taxon>Streptococcaceae</taxon>
        <taxon>Streptococcus</taxon>
    </lineage>
</organism>
<keyword id="KW-0963">Cytoplasm</keyword>
<keyword id="KW-0369">Histidine metabolism</keyword>
<keyword id="KW-0456">Lyase</keyword>
<keyword id="KW-1185">Reference proteome</keyword>
<evidence type="ECO:0000255" key="1">
    <source>
        <dbReference type="HAMAP-Rule" id="MF_00229"/>
    </source>
</evidence>
<evidence type="ECO:0000305" key="2"/>